<dbReference type="EC" id="5.4.3.8" evidence="1"/>
<dbReference type="EMBL" id="CP000526">
    <property type="protein sequence ID" value="ABM52292.1"/>
    <property type="status" value="ALT_INIT"/>
    <property type="molecule type" value="Genomic_DNA"/>
</dbReference>
<dbReference type="RefSeq" id="WP_004527562.1">
    <property type="nucleotide sequence ID" value="NC_008785.1"/>
</dbReference>
<dbReference type="SMR" id="A1V1L0"/>
<dbReference type="KEGG" id="bmv:BMASAVP1_A0768"/>
<dbReference type="HOGENOM" id="CLU_016922_1_5_4"/>
<dbReference type="UniPathway" id="UPA00251">
    <property type="reaction ID" value="UER00317"/>
</dbReference>
<dbReference type="GO" id="GO:0005737">
    <property type="term" value="C:cytoplasm"/>
    <property type="evidence" value="ECO:0007669"/>
    <property type="project" value="UniProtKB-SubCell"/>
</dbReference>
<dbReference type="GO" id="GO:0042286">
    <property type="term" value="F:glutamate-1-semialdehyde 2,1-aminomutase activity"/>
    <property type="evidence" value="ECO:0007669"/>
    <property type="project" value="UniProtKB-UniRule"/>
</dbReference>
<dbReference type="GO" id="GO:0030170">
    <property type="term" value="F:pyridoxal phosphate binding"/>
    <property type="evidence" value="ECO:0007669"/>
    <property type="project" value="InterPro"/>
</dbReference>
<dbReference type="GO" id="GO:0008483">
    <property type="term" value="F:transaminase activity"/>
    <property type="evidence" value="ECO:0007669"/>
    <property type="project" value="InterPro"/>
</dbReference>
<dbReference type="GO" id="GO:0006782">
    <property type="term" value="P:protoporphyrinogen IX biosynthetic process"/>
    <property type="evidence" value="ECO:0007669"/>
    <property type="project" value="UniProtKB-UniRule"/>
</dbReference>
<dbReference type="CDD" id="cd00610">
    <property type="entry name" value="OAT_like"/>
    <property type="match status" value="1"/>
</dbReference>
<dbReference type="FunFam" id="3.40.640.10:FF:000021">
    <property type="entry name" value="Glutamate-1-semialdehyde 2,1-aminomutase"/>
    <property type="match status" value="1"/>
</dbReference>
<dbReference type="Gene3D" id="3.90.1150.10">
    <property type="entry name" value="Aspartate Aminotransferase, domain 1"/>
    <property type="match status" value="1"/>
</dbReference>
<dbReference type="Gene3D" id="3.40.640.10">
    <property type="entry name" value="Type I PLP-dependent aspartate aminotransferase-like (Major domain)"/>
    <property type="match status" value="1"/>
</dbReference>
<dbReference type="HAMAP" id="MF_00375">
    <property type="entry name" value="HemL_aminotrans_3"/>
    <property type="match status" value="1"/>
</dbReference>
<dbReference type="InterPro" id="IPR004639">
    <property type="entry name" value="4pyrrol_synth_GluAld_NH2Trfase"/>
</dbReference>
<dbReference type="InterPro" id="IPR005814">
    <property type="entry name" value="Aminotrans_3"/>
</dbReference>
<dbReference type="InterPro" id="IPR049704">
    <property type="entry name" value="Aminotrans_3_PPA_site"/>
</dbReference>
<dbReference type="InterPro" id="IPR015424">
    <property type="entry name" value="PyrdxlP-dep_Trfase"/>
</dbReference>
<dbReference type="InterPro" id="IPR015421">
    <property type="entry name" value="PyrdxlP-dep_Trfase_major"/>
</dbReference>
<dbReference type="InterPro" id="IPR015422">
    <property type="entry name" value="PyrdxlP-dep_Trfase_small"/>
</dbReference>
<dbReference type="NCBIfam" id="TIGR00713">
    <property type="entry name" value="hemL"/>
    <property type="match status" value="1"/>
</dbReference>
<dbReference type="NCBIfam" id="NF000818">
    <property type="entry name" value="PRK00062.1"/>
    <property type="match status" value="1"/>
</dbReference>
<dbReference type="PANTHER" id="PTHR43713">
    <property type="entry name" value="GLUTAMATE-1-SEMIALDEHYDE 2,1-AMINOMUTASE"/>
    <property type="match status" value="1"/>
</dbReference>
<dbReference type="PANTHER" id="PTHR43713:SF3">
    <property type="entry name" value="GLUTAMATE-1-SEMIALDEHYDE 2,1-AMINOMUTASE 1, CHLOROPLASTIC-RELATED"/>
    <property type="match status" value="1"/>
</dbReference>
<dbReference type="Pfam" id="PF00202">
    <property type="entry name" value="Aminotran_3"/>
    <property type="match status" value="1"/>
</dbReference>
<dbReference type="SUPFAM" id="SSF53383">
    <property type="entry name" value="PLP-dependent transferases"/>
    <property type="match status" value="1"/>
</dbReference>
<dbReference type="PROSITE" id="PS00600">
    <property type="entry name" value="AA_TRANSFER_CLASS_3"/>
    <property type="match status" value="1"/>
</dbReference>
<comment type="catalytic activity">
    <reaction evidence="1">
        <text>(S)-4-amino-5-oxopentanoate = 5-aminolevulinate</text>
        <dbReference type="Rhea" id="RHEA:14265"/>
        <dbReference type="ChEBI" id="CHEBI:57501"/>
        <dbReference type="ChEBI" id="CHEBI:356416"/>
        <dbReference type="EC" id="5.4.3.8"/>
    </reaction>
</comment>
<comment type="cofactor">
    <cofactor evidence="1">
        <name>pyridoxal 5'-phosphate</name>
        <dbReference type="ChEBI" id="CHEBI:597326"/>
    </cofactor>
</comment>
<comment type="pathway">
    <text evidence="1">Porphyrin-containing compound metabolism; protoporphyrin-IX biosynthesis; 5-aminolevulinate from L-glutamyl-tRNA(Glu): step 2/2.</text>
</comment>
<comment type="subunit">
    <text evidence="1">Homodimer.</text>
</comment>
<comment type="subcellular location">
    <subcellularLocation>
        <location evidence="1">Cytoplasm</location>
    </subcellularLocation>
</comment>
<comment type="similarity">
    <text evidence="1">Belongs to the class-III pyridoxal-phosphate-dependent aminotransferase family. HemL subfamily.</text>
</comment>
<comment type="sequence caution" evidence="2">
    <conflict type="erroneous initiation">
        <sequence resource="EMBL-CDS" id="ABM52292"/>
    </conflict>
</comment>
<sequence>MSNNQTLFERAQRTIPGGVNSPVRAFRSVGGTPRFVARAQGAYFWDADGKRYIDYIGSWGPMIVGHVHPDVLAAVQRVLADGFSFGAPTEAEIEIAEEICKLVPSIEQVRMVSSGTEATMSALRLARGFTGRSRIVKFEGCYHGHADSLLVKAGSGLLTFGNPTSAGVPADVAKHTTVLEYNNVAALEEAFAAFGGEIAAVIVEPVAGNMNLVRGTPEFLNALRALTAKHGAVLIFDEVMCGFRVALGGAQQHYGITPDLTCLGKVIGGGMPAAAFGGRGDIMSHLAPLGGVYQAGTLSGNPVAVAAGLATLRLIQAPGFHDALADKTRRLADGLAAEARAAGVPFSADAIGGMFGLYFTEQVPASFADVTKSDIERFNRFFHLMLDAGVYFAPSAYEAGFVSSAHDDATLDATLDAARRAFAALRA</sequence>
<protein>
    <recommendedName>
        <fullName evidence="1">Glutamate-1-semialdehyde 2,1-aminomutase</fullName>
        <shortName evidence="1">GSA</shortName>
        <ecNumber evidence="1">5.4.3.8</ecNumber>
    </recommendedName>
    <alternativeName>
        <fullName evidence="1">Glutamate-1-semialdehyde aminotransferase</fullName>
        <shortName evidence="1">GSA-AT</shortName>
    </alternativeName>
</protein>
<organism>
    <name type="scientific">Burkholderia mallei (strain SAVP1)</name>
    <dbReference type="NCBI Taxonomy" id="320388"/>
    <lineage>
        <taxon>Bacteria</taxon>
        <taxon>Pseudomonadati</taxon>
        <taxon>Pseudomonadota</taxon>
        <taxon>Betaproteobacteria</taxon>
        <taxon>Burkholderiales</taxon>
        <taxon>Burkholderiaceae</taxon>
        <taxon>Burkholderia</taxon>
        <taxon>pseudomallei group</taxon>
    </lineage>
</organism>
<name>GSA_BURMS</name>
<gene>
    <name evidence="1" type="primary">hemL</name>
    <name type="ordered locus">BMASAVP1_A0768</name>
</gene>
<evidence type="ECO:0000255" key="1">
    <source>
        <dbReference type="HAMAP-Rule" id="MF_00375"/>
    </source>
</evidence>
<evidence type="ECO:0000305" key="2"/>
<accession>A1V1L0</accession>
<reference key="1">
    <citation type="journal article" date="2010" name="Genome Biol. Evol.">
        <title>Continuing evolution of Burkholderia mallei through genome reduction and large-scale rearrangements.</title>
        <authorList>
            <person name="Losada L."/>
            <person name="Ronning C.M."/>
            <person name="DeShazer D."/>
            <person name="Woods D."/>
            <person name="Fedorova N."/>
            <person name="Kim H.S."/>
            <person name="Shabalina S.A."/>
            <person name="Pearson T.R."/>
            <person name="Brinkac L."/>
            <person name="Tan P."/>
            <person name="Nandi T."/>
            <person name="Crabtree J."/>
            <person name="Badger J."/>
            <person name="Beckstrom-Sternberg S."/>
            <person name="Saqib M."/>
            <person name="Schutzer S.E."/>
            <person name="Keim P."/>
            <person name="Nierman W.C."/>
        </authorList>
    </citation>
    <scope>NUCLEOTIDE SEQUENCE [LARGE SCALE GENOMIC DNA]</scope>
    <source>
        <strain>SAVP1</strain>
    </source>
</reference>
<feature type="chain" id="PRO_0000382287" description="Glutamate-1-semialdehyde 2,1-aminomutase">
    <location>
        <begin position="1"/>
        <end position="427"/>
    </location>
</feature>
<feature type="modified residue" description="N6-(pyridoxal phosphate)lysine" evidence="1">
    <location>
        <position position="265"/>
    </location>
</feature>
<keyword id="KW-0963">Cytoplasm</keyword>
<keyword id="KW-0413">Isomerase</keyword>
<keyword id="KW-0627">Porphyrin biosynthesis</keyword>
<keyword id="KW-0663">Pyridoxal phosphate</keyword>
<proteinExistence type="inferred from homology"/>